<sequence length="92" mass="9827">MATEQTILVGKKPTTNYVIATVMAFNAGVKKVVLKARGAAISKAVSTAVMVRDRFLPGKVQIKDIKLLSDKVQGQGGRERTVAAVEIVLEMA</sequence>
<protein>
    <recommendedName>
        <fullName evidence="1">DNA/RNA-binding protein Alba</fullName>
    </recommendedName>
</protein>
<gene>
    <name evidence="1" type="primary">albA</name>
    <name type="ordered locus">Pisl_0857</name>
</gene>
<feature type="chain" id="PRO_1000065264" description="DNA/RNA-binding protein Alba">
    <location>
        <begin position="1"/>
        <end position="92"/>
    </location>
</feature>
<feature type="modified residue" description="N6-acetyllysine" evidence="1">
    <location>
        <position position="11"/>
    </location>
</feature>
<keyword id="KW-0007">Acetylation</keyword>
<keyword id="KW-0158">Chromosome</keyword>
<keyword id="KW-0963">Cytoplasm</keyword>
<keyword id="KW-0226">DNA condensation</keyword>
<keyword id="KW-0238">DNA-binding</keyword>
<name>ALBA_PYRIL</name>
<accession>A1RSV1</accession>
<proteinExistence type="inferred from homology"/>
<evidence type="ECO:0000255" key="1">
    <source>
        <dbReference type="HAMAP-Rule" id="MF_01122"/>
    </source>
</evidence>
<organism>
    <name type="scientific">Pyrobaculum islandicum (strain DSM 4184 / JCM 9189 / GEO3)</name>
    <dbReference type="NCBI Taxonomy" id="384616"/>
    <lineage>
        <taxon>Archaea</taxon>
        <taxon>Thermoproteota</taxon>
        <taxon>Thermoprotei</taxon>
        <taxon>Thermoproteales</taxon>
        <taxon>Thermoproteaceae</taxon>
        <taxon>Pyrobaculum</taxon>
    </lineage>
</organism>
<reference key="1">
    <citation type="submission" date="2006-12" db="EMBL/GenBank/DDBJ databases">
        <title>Complete sequence of Pyrobaculum islandicum DSM 4184.</title>
        <authorList>
            <person name="Copeland A."/>
            <person name="Lucas S."/>
            <person name="Lapidus A."/>
            <person name="Barry K."/>
            <person name="Detter J.C."/>
            <person name="Glavina del Rio T."/>
            <person name="Dalin E."/>
            <person name="Tice H."/>
            <person name="Pitluck S."/>
            <person name="Meincke L."/>
            <person name="Brettin T."/>
            <person name="Bruce D."/>
            <person name="Han C."/>
            <person name="Tapia R."/>
            <person name="Gilna P."/>
            <person name="Schmutz J."/>
            <person name="Larimer F."/>
            <person name="Land M."/>
            <person name="Hauser L."/>
            <person name="Kyrpides N."/>
            <person name="Mikhailova N."/>
            <person name="Cozen A.E."/>
            <person name="Fitz-Gibbon S.T."/>
            <person name="House C.H."/>
            <person name="Saltikov C."/>
            <person name="Lowe T."/>
            <person name="Richardson P."/>
        </authorList>
    </citation>
    <scope>NUCLEOTIDE SEQUENCE [LARGE SCALE GENOMIC DNA]</scope>
    <source>
        <strain>DSM 4184 / JCM 9189 / GEO3</strain>
    </source>
</reference>
<comment type="function">
    <text evidence="1">Binds double-stranded DNA tightly but without sequence specificity. Involved in DNA compaction.</text>
</comment>
<comment type="subcellular location">
    <subcellularLocation>
        <location evidence="1">Cytoplasm</location>
    </subcellularLocation>
    <subcellularLocation>
        <location evidence="1">Chromosome</location>
    </subcellularLocation>
</comment>
<comment type="PTM">
    <text evidence="1">Acetylated. Acetylation at Lys-11 decreases DNA-binding affinity.</text>
</comment>
<comment type="similarity">
    <text evidence="1">Belongs to the histone-like Alba family.</text>
</comment>
<dbReference type="EMBL" id="CP000504">
    <property type="protein sequence ID" value="ABL88033.1"/>
    <property type="molecule type" value="Genomic_DNA"/>
</dbReference>
<dbReference type="RefSeq" id="WP_011762609.1">
    <property type="nucleotide sequence ID" value="NC_008701.1"/>
</dbReference>
<dbReference type="SMR" id="A1RSV1"/>
<dbReference type="STRING" id="384616.Pisl_0857"/>
<dbReference type="GeneID" id="4618272"/>
<dbReference type="KEGG" id="pis:Pisl_0857"/>
<dbReference type="eggNOG" id="arCOG01753">
    <property type="taxonomic scope" value="Archaea"/>
</dbReference>
<dbReference type="HOGENOM" id="CLU_110989_1_0_2"/>
<dbReference type="OrthoDB" id="10360at2157"/>
<dbReference type="Proteomes" id="UP000002595">
    <property type="component" value="Chromosome"/>
</dbReference>
<dbReference type="GO" id="GO:0005694">
    <property type="term" value="C:chromosome"/>
    <property type="evidence" value="ECO:0007669"/>
    <property type="project" value="UniProtKB-SubCell"/>
</dbReference>
<dbReference type="GO" id="GO:0005737">
    <property type="term" value="C:cytoplasm"/>
    <property type="evidence" value="ECO:0007669"/>
    <property type="project" value="UniProtKB-SubCell"/>
</dbReference>
<dbReference type="GO" id="GO:0003690">
    <property type="term" value="F:double-stranded DNA binding"/>
    <property type="evidence" value="ECO:0007669"/>
    <property type="project" value="UniProtKB-UniRule"/>
</dbReference>
<dbReference type="GO" id="GO:0003723">
    <property type="term" value="F:RNA binding"/>
    <property type="evidence" value="ECO:0007669"/>
    <property type="project" value="InterPro"/>
</dbReference>
<dbReference type="GO" id="GO:0030261">
    <property type="term" value="P:chromosome condensation"/>
    <property type="evidence" value="ECO:0007669"/>
    <property type="project" value="UniProtKB-KW"/>
</dbReference>
<dbReference type="Gene3D" id="3.30.110.20">
    <property type="entry name" value="Alba-like domain"/>
    <property type="match status" value="1"/>
</dbReference>
<dbReference type="HAMAP" id="MF_01122">
    <property type="entry name" value="AlbA"/>
    <property type="match status" value="1"/>
</dbReference>
<dbReference type="InterPro" id="IPR036882">
    <property type="entry name" value="Alba-like_dom_sf"/>
</dbReference>
<dbReference type="InterPro" id="IPR013795">
    <property type="entry name" value="DNA/RNA-bd_Alba"/>
</dbReference>
<dbReference type="InterPro" id="IPR002775">
    <property type="entry name" value="DNA/RNA-bd_Alba-like"/>
</dbReference>
<dbReference type="NCBIfam" id="TIGR00285">
    <property type="entry name" value="DNA-binding protein Alba"/>
    <property type="match status" value="1"/>
</dbReference>
<dbReference type="NCBIfam" id="NF003088">
    <property type="entry name" value="PRK04015.1"/>
    <property type="match status" value="1"/>
</dbReference>
<dbReference type="Pfam" id="PF01918">
    <property type="entry name" value="Alba"/>
    <property type="match status" value="1"/>
</dbReference>
<dbReference type="PIRSF" id="PIRSF028732">
    <property type="entry name" value="Alba"/>
    <property type="match status" value="1"/>
</dbReference>
<dbReference type="SUPFAM" id="SSF82704">
    <property type="entry name" value="AlbA-like"/>
    <property type="match status" value="1"/>
</dbReference>